<evidence type="ECO:0000255" key="1">
    <source>
        <dbReference type="HAMAP-Rule" id="MF_02206"/>
    </source>
</evidence>
<reference key="1">
    <citation type="journal article" date="2005" name="Proc. Natl. Acad. Sci. U.S.A.">
        <title>Whole genome sequence of Staphylococcus saprophyticus reveals the pathogenesis of uncomplicated urinary tract infection.</title>
        <authorList>
            <person name="Kuroda M."/>
            <person name="Yamashita A."/>
            <person name="Hirakawa H."/>
            <person name="Kumano M."/>
            <person name="Morikawa K."/>
            <person name="Higashide M."/>
            <person name="Maruyama A."/>
            <person name="Inose Y."/>
            <person name="Matoba K."/>
            <person name="Toh H."/>
            <person name="Kuhara S."/>
            <person name="Hattori M."/>
            <person name="Ohta T."/>
        </authorList>
    </citation>
    <scope>NUCLEOTIDE SEQUENCE [LARGE SCALE GENOMIC DNA]</scope>
    <source>
        <strain>ATCC 15305 / DSM 20229 / NCIMB 8711 / NCTC 7292 / S-41</strain>
    </source>
</reference>
<protein>
    <recommendedName>
        <fullName evidence="1">3'-5' exonuclease DinG</fullName>
        <ecNumber evidence="1">3.1.-.-</ecNumber>
    </recommendedName>
</protein>
<dbReference type="EC" id="3.1.-.-" evidence="1"/>
<dbReference type="EMBL" id="AP008934">
    <property type="protein sequence ID" value="BAE18434.1"/>
    <property type="molecule type" value="Genomic_DNA"/>
</dbReference>
<dbReference type="RefSeq" id="WP_011303079.1">
    <property type="nucleotide sequence ID" value="NZ_MTGA01000038.1"/>
</dbReference>
<dbReference type="SMR" id="Q49XR1"/>
<dbReference type="GeneID" id="3616529"/>
<dbReference type="KEGG" id="ssp:SSP1289"/>
<dbReference type="PATRIC" id="fig|342451.11.peg.1291"/>
<dbReference type="eggNOG" id="COG0847">
    <property type="taxonomic scope" value="Bacteria"/>
</dbReference>
<dbReference type="eggNOG" id="COG1199">
    <property type="taxonomic scope" value="Bacteria"/>
</dbReference>
<dbReference type="HOGENOM" id="CLU_012117_1_1_9"/>
<dbReference type="OrthoDB" id="9803913at2"/>
<dbReference type="Proteomes" id="UP000006371">
    <property type="component" value="Chromosome"/>
</dbReference>
<dbReference type="GO" id="GO:0005829">
    <property type="term" value="C:cytosol"/>
    <property type="evidence" value="ECO:0007669"/>
    <property type="project" value="TreeGrafter"/>
</dbReference>
<dbReference type="GO" id="GO:0008408">
    <property type="term" value="F:3'-5' exonuclease activity"/>
    <property type="evidence" value="ECO:0007669"/>
    <property type="project" value="UniProtKB-UniRule"/>
</dbReference>
<dbReference type="GO" id="GO:0005524">
    <property type="term" value="F:ATP binding"/>
    <property type="evidence" value="ECO:0007669"/>
    <property type="project" value="UniProtKB-UniRule"/>
</dbReference>
<dbReference type="GO" id="GO:0003677">
    <property type="term" value="F:DNA binding"/>
    <property type="evidence" value="ECO:0007669"/>
    <property type="project" value="InterPro"/>
</dbReference>
<dbReference type="GO" id="GO:0003887">
    <property type="term" value="F:DNA-directed DNA polymerase activity"/>
    <property type="evidence" value="ECO:0007669"/>
    <property type="project" value="InterPro"/>
</dbReference>
<dbReference type="GO" id="GO:0004386">
    <property type="term" value="F:helicase activity"/>
    <property type="evidence" value="ECO:0007669"/>
    <property type="project" value="InterPro"/>
</dbReference>
<dbReference type="GO" id="GO:0016818">
    <property type="term" value="F:hydrolase activity, acting on acid anhydrides, in phosphorus-containing anhydrides"/>
    <property type="evidence" value="ECO:0007669"/>
    <property type="project" value="InterPro"/>
</dbReference>
<dbReference type="GO" id="GO:0045004">
    <property type="term" value="P:DNA replication proofreading"/>
    <property type="evidence" value="ECO:0007669"/>
    <property type="project" value="TreeGrafter"/>
</dbReference>
<dbReference type="CDD" id="cd06127">
    <property type="entry name" value="DEDDh"/>
    <property type="match status" value="1"/>
</dbReference>
<dbReference type="FunFam" id="3.30.420.10:FF:000045">
    <property type="entry name" value="3'-5' exonuclease DinG"/>
    <property type="match status" value="1"/>
</dbReference>
<dbReference type="Gene3D" id="3.40.50.300">
    <property type="entry name" value="P-loop containing nucleotide triphosphate hydrolases"/>
    <property type="match status" value="2"/>
</dbReference>
<dbReference type="Gene3D" id="3.30.420.10">
    <property type="entry name" value="Ribonuclease H-like superfamily/Ribonuclease H"/>
    <property type="match status" value="1"/>
</dbReference>
<dbReference type="HAMAP" id="MF_02206">
    <property type="entry name" value="DinG_exonucl"/>
    <property type="match status" value="1"/>
</dbReference>
<dbReference type="InterPro" id="IPR006555">
    <property type="entry name" value="ATP-dep_Helicase_C"/>
</dbReference>
<dbReference type="InterPro" id="IPR006310">
    <property type="entry name" value="DinG"/>
</dbReference>
<dbReference type="InterPro" id="IPR006054">
    <property type="entry name" value="DnaQ"/>
</dbReference>
<dbReference type="InterPro" id="IPR013520">
    <property type="entry name" value="Exonuclease_RNaseT/DNA_pol3"/>
</dbReference>
<dbReference type="InterPro" id="IPR014013">
    <property type="entry name" value="Helic_SF1/SF2_ATP-bd_DinG/Rad3"/>
</dbReference>
<dbReference type="InterPro" id="IPR027417">
    <property type="entry name" value="P-loop_NTPase"/>
</dbReference>
<dbReference type="InterPro" id="IPR012337">
    <property type="entry name" value="RNaseH-like_sf"/>
</dbReference>
<dbReference type="InterPro" id="IPR036397">
    <property type="entry name" value="RNaseH_sf"/>
</dbReference>
<dbReference type="NCBIfam" id="TIGR01407">
    <property type="entry name" value="dinG_rel"/>
    <property type="match status" value="1"/>
</dbReference>
<dbReference type="NCBIfam" id="TIGR00573">
    <property type="entry name" value="dnaq"/>
    <property type="match status" value="1"/>
</dbReference>
<dbReference type="PANTHER" id="PTHR30231">
    <property type="entry name" value="DNA POLYMERASE III SUBUNIT EPSILON"/>
    <property type="match status" value="1"/>
</dbReference>
<dbReference type="PANTHER" id="PTHR30231:SF41">
    <property type="entry name" value="DNA POLYMERASE III SUBUNIT EPSILON"/>
    <property type="match status" value="1"/>
</dbReference>
<dbReference type="Pfam" id="PF13307">
    <property type="entry name" value="Helicase_C_2"/>
    <property type="match status" value="1"/>
</dbReference>
<dbReference type="Pfam" id="PF00929">
    <property type="entry name" value="RNase_T"/>
    <property type="match status" value="1"/>
</dbReference>
<dbReference type="SMART" id="SM00479">
    <property type="entry name" value="EXOIII"/>
    <property type="match status" value="1"/>
</dbReference>
<dbReference type="SMART" id="SM00491">
    <property type="entry name" value="HELICc2"/>
    <property type="match status" value="1"/>
</dbReference>
<dbReference type="SUPFAM" id="SSF52540">
    <property type="entry name" value="P-loop containing nucleoside triphosphate hydrolases"/>
    <property type="match status" value="1"/>
</dbReference>
<dbReference type="SUPFAM" id="SSF53098">
    <property type="entry name" value="Ribonuclease H-like"/>
    <property type="match status" value="1"/>
</dbReference>
<dbReference type="PROSITE" id="PS51193">
    <property type="entry name" value="HELICASE_ATP_BIND_2"/>
    <property type="match status" value="1"/>
</dbReference>
<dbReference type="PROSITE" id="PS51194">
    <property type="entry name" value="HELICASE_CTER"/>
    <property type="match status" value="1"/>
</dbReference>
<proteinExistence type="inferred from homology"/>
<name>DING_STAS1</name>
<organism>
    <name type="scientific">Staphylococcus saprophyticus subsp. saprophyticus (strain ATCC 15305 / DSM 20229 / NCIMB 8711 / NCTC 7292 / S-41)</name>
    <dbReference type="NCBI Taxonomy" id="342451"/>
    <lineage>
        <taxon>Bacteria</taxon>
        <taxon>Bacillati</taxon>
        <taxon>Bacillota</taxon>
        <taxon>Bacilli</taxon>
        <taxon>Bacillales</taxon>
        <taxon>Staphylococcaceae</taxon>
        <taxon>Staphylococcus</taxon>
    </lineage>
</organism>
<comment type="function">
    <text evidence="1">3'-5' exonuclease.</text>
</comment>
<comment type="similarity">
    <text evidence="1">Belongs to the helicase family. DinG subfamily. Type 2 sub-subfamily.</text>
</comment>
<feature type="chain" id="PRO_0000277603" description="3'-5' exonuclease DinG">
    <location>
        <begin position="1"/>
        <end position="900"/>
    </location>
</feature>
<feature type="domain" description="Exonuclease" evidence="1">
    <location>
        <begin position="8"/>
        <end position="161"/>
    </location>
</feature>
<feature type="domain" description="Helicase ATP-binding" evidence="1">
    <location>
        <begin position="241"/>
        <end position="496"/>
    </location>
</feature>
<feature type="domain" description="Helicase C-terminal" evidence="1">
    <location>
        <begin position="714"/>
        <end position="883"/>
    </location>
</feature>
<feature type="short sequence motif" description="DEAH box" evidence="1">
    <location>
        <begin position="448"/>
        <end position="451"/>
    </location>
</feature>
<feature type="binding site" evidence="1">
    <location>
        <begin position="276"/>
        <end position="283"/>
    </location>
    <ligand>
        <name>ATP</name>
        <dbReference type="ChEBI" id="CHEBI:30616"/>
    </ligand>
</feature>
<accession>Q49XR1</accession>
<gene>
    <name evidence="1" type="primary">dinG</name>
    <name type="ordered locus">SSP1289</name>
</gene>
<keyword id="KW-0067">ATP-binding</keyword>
<keyword id="KW-0269">Exonuclease</keyword>
<keyword id="KW-0378">Hydrolase</keyword>
<keyword id="KW-0540">Nuclease</keyword>
<keyword id="KW-0547">Nucleotide-binding</keyword>
<keyword id="KW-1185">Reference proteome</keyword>
<sequence>MAKPCYAVVDLETTGNQLDYDEIIQIGITFVRENKIIGTYHSMIKTDLEIPPFIQALTSIEEDMLNQAPYFHEIAEDIYKQIDGCIFVAHNVAFDLNFIKKSFKQCHINYRPKKVMDTLELFKVAFPTDKSYQLSELAEAHGIILNNAHRADEDAATTAQLMIIAFEKFESLPLDTLKQLYYLSKNLKYDLHDIIFEMVRNYDEQTLSDRFDQFEQIIYKKQIDFKAPTVQFGGNLKALYTLVTKELGLTYRPQQLYLSEIILEQLMHSEKAMIEAPLGSGKSFAYLLASLMYNIETGKHVMISTNTKLLQNQLLEKDIPAIKKALDFKINATLIKSKRDYIALGLISQILEEESSNYEVCILKMQLLIWITETDTGDIQELDLKGGQKMYFEQKLETYVPVRNDIHYFNFIKRNAQNIQIGITNHAHLIHAAHDNSIYQLFDDCIIDEAHRLPDYALNQVTNELSYADIKYQLGLIGKTENEKLLKSIDLLEQQRILEKLDIPPIDVFGLKTTVNEIHDLNEQLFTTMYDIIQSSEIQDDEVHKLHFVYHFDVTPILNDLHAIIHKLNMTLEFFNGMSHKSIKSVRKQFLYINDRFKDIEQSLKNKHTCYLSIKNLNQKSTIRLNVKDYDVKEILTKQVLDKFKSLTFISGTLTFNHSFENFKQWFNKDIEFNTYEIDTTVTSPNQTTVFIPNDVSSYNYKNINDYVSSIVNYVIEYVSVVESKCLILFTSYKMMHMVQELINELPEFEDYVVLTQQQNQNYKIVQQFNSFNKAILLGTGTFFEGFDFQSNGIKCVMIAKLPFMNQNNTKYWLMESEFTSTFKEYVLPDAVTRFRQGLGRLIRSENDKGIIVSFDDRLIRSNYKQFFEQSLERYRQKKGDIKQFSTLLKKLKKENAKKP</sequence>